<accession>B7GW27</accession>
<comment type="function">
    <text evidence="1">DNA-dependent RNA polymerase catalyzes the transcription of DNA into RNA using the four ribonucleoside triphosphates as substrates.</text>
</comment>
<comment type="catalytic activity">
    <reaction evidence="1">
        <text>RNA(n) + a ribonucleoside 5'-triphosphate = RNA(n+1) + diphosphate</text>
        <dbReference type="Rhea" id="RHEA:21248"/>
        <dbReference type="Rhea" id="RHEA-COMP:14527"/>
        <dbReference type="Rhea" id="RHEA-COMP:17342"/>
        <dbReference type="ChEBI" id="CHEBI:33019"/>
        <dbReference type="ChEBI" id="CHEBI:61557"/>
        <dbReference type="ChEBI" id="CHEBI:140395"/>
        <dbReference type="EC" id="2.7.7.6"/>
    </reaction>
</comment>
<comment type="subunit">
    <text evidence="1">Homodimer. The RNAP catalytic core consists of 2 alpha, 1 beta, 1 beta' and 1 omega subunit. When a sigma factor is associated with the core the holoenzyme is formed, which can initiate transcription.</text>
</comment>
<comment type="domain">
    <text evidence="1">The N-terminal domain is essential for RNAP assembly and basal transcription, whereas the C-terminal domain is involved in interaction with transcriptional regulators and with upstream promoter elements.</text>
</comment>
<comment type="similarity">
    <text evidence="1">Belongs to the RNA polymerase alpha chain family.</text>
</comment>
<reference key="1">
    <citation type="journal article" date="2008" name="J. Bacteriol.">
        <title>Comparative genome sequence analysis of multidrug-resistant Acinetobacter baumannii.</title>
        <authorList>
            <person name="Adams M.D."/>
            <person name="Goglin K."/>
            <person name="Molyneaux N."/>
            <person name="Hujer K.M."/>
            <person name="Lavender H."/>
            <person name="Jamison J.J."/>
            <person name="MacDonald I.J."/>
            <person name="Martin K.M."/>
            <person name="Russo T."/>
            <person name="Campagnari A.A."/>
            <person name="Hujer A.M."/>
            <person name="Bonomo R.A."/>
            <person name="Gill S.R."/>
        </authorList>
    </citation>
    <scope>NUCLEOTIDE SEQUENCE [LARGE SCALE GENOMIC DNA]</scope>
    <source>
        <strain>AB307-0294</strain>
    </source>
</reference>
<keyword id="KW-0240">DNA-directed RNA polymerase</keyword>
<keyword id="KW-0548">Nucleotidyltransferase</keyword>
<keyword id="KW-0804">Transcription</keyword>
<keyword id="KW-0808">Transferase</keyword>
<protein>
    <recommendedName>
        <fullName evidence="1">DNA-directed RNA polymerase subunit alpha</fullName>
        <shortName evidence="1">RNAP subunit alpha</shortName>
        <ecNumber evidence="1">2.7.7.6</ecNumber>
    </recommendedName>
    <alternativeName>
        <fullName evidence="1">RNA polymerase subunit alpha</fullName>
    </alternativeName>
    <alternativeName>
        <fullName evidence="1">Transcriptase subunit alpha</fullName>
    </alternativeName>
</protein>
<organism>
    <name type="scientific">Acinetobacter baumannii (strain AB307-0294)</name>
    <dbReference type="NCBI Taxonomy" id="557600"/>
    <lineage>
        <taxon>Bacteria</taxon>
        <taxon>Pseudomonadati</taxon>
        <taxon>Pseudomonadota</taxon>
        <taxon>Gammaproteobacteria</taxon>
        <taxon>Moraxellales</taxon>
        <taxon>Moraxellaceae</taxon>
        <taxon>Acinetobacter</taxon>
        <taxon>Acinetobacter calcoaceticus/baumannii complex</taxon>
    </lineage>
</organism>
<gene>
    <name evidence="1" type="primary">rpoA</name>
    <name type="ordered locus">ABBFA_000457</name>
</gene>
<sequence>MTRTANEFLTPQAIKVEAVSGTSAKVILEPLERGFGHTLGNALRRILLSSLPGAAVVEVEIEGVEHEYSTLEGLQQDIVELLLNLKGLSIKLFDQNEAYLTLEKQGPGDITAADLRLPHNVEVVNPEHLIGTLSATGSLKMRLKVSQGRGYETSDSRFPEGETRPVGRLQLDASYSPIKRVSYTVENARVEQRTDLDKLVIDLETNGTVDPEEAIRKAATILQQQIAIFVDLQKDQTPVAQEPREEVDPILLRPVDDLELTVRSANCLKAENIYYIGDLVQRTEVELLKTPNLGKKSLTEIKDVLASKGLQLGMRLENWPPASLRMDDRFAYRSR</sequence>
<feature type="chain" id="PRO_1000196622" description="DNA-directed RNA polymerase subunit alpha">
    <location>
        <begin position="1"/>
        <end position="335"/>
    </location>
</feature>
<feature type="region of interest" description="Alpha N-terminal domain (alpha-NTD)" evidence="1">
    <location>
        <begin position="1"/>
        <end position="233"/>
    </location>
</feature>
<feature type="region of interest" description="Alpha C-terminal domain (alpha-CTD)" evidence="1">
    <location>
        <begin position="247"/>
        <end position="335"/>
    </location>
</feature>
<name>RPOA_ACIB3</name>
<evidence type="ECO:0000255" key="1">
    <source>
        <dbReference type="HAMAP-Rule" id="MF_00059"/>
    </source>
</evidence>
<dbReference type="EC" id="2.7.7.6" evidence="1"/>
<dbReference type="EMBL" id="CP001172">
    <property type="protein sequence ID" value="ACJ59193.1"/>
    <property type="molecule type" value="Genomic_DNA"/>
</dbReference>
<dbReference type="RefSeq" id="WP_000198631.1">
    <property type="nucleotide sequence ID" value="NZ_CP001172.1"/>
</dbReference>
<dbReference type="SMR" id="B7GW27"/>
<dbReference type="GeneID" id="92895292"/>
<dbReference type="HOGENOM" id="CLU_053084_0_0_6"/>
<dbReference type="Proteomes" id="UP000006924">
    <property type="component" value="Chromosome"/>
</dbReference>
<dbReference type="GO" id="GO:0005737">
    <property type="term" value="C:cytoplasm"/>
    <property type="evidence" value="ECO:0007669"/>
    <property type="project" value="UniProtKB-ARBA"/>
</dbReference>
<dbReference type="GO" id="GO:0000428">
    <property type="term" value="C:DNA-directed RNA polymerase complex"/>
    <property type="evidence" value="ECO:0007669"/>
    <property type="project" value="UniProtKB-KW"/>
</dbReference>
<dbReference type="GO" id="GO:0003677">
    <property type="term" value="F:DNA binding"/>
    <property type="evidence" value="ECO:0007669"/>
    <property type="project" value="UniProtKB-UniRule"/>
</dbReference>
<dbReference type="GO" id="GO:0003899">
    <property type="term" value="F:DNA-directed RNA polymerase activity"/>
    <property type="evidence" value="ECO:0007669"/>
    <property type="project" value="UniProtKB-UniRule"/>
</dbReference>
<dbReference type="GO" id="GO:0046983">
    <property type="term" value="F:protein dimerization activity"/>
    <property type="evidence" value="ECO:0007669"/>
    <property type="project" value="InterPro"/>
</dbReference>
<dbReference type="GO" id="GO:0006351">
    <property type="term" value="P:DNA-templated transcription"/>
    <property type="evidence" value="ECO:0007669"/>
    <property type="project" value="UniProtKB-UniRule"/>
</dbReference>
<dbReference type="CDD" id="cd06928">
    <property type="entry name" value="RNAP_alpha_NTD"/>
    <property type="match status" value="1"/>
</dbReference>
<dbReference type="FunFam" id="1.10.150.20:FF:000001">
    <property type="entry name" value="DNA-directed RNA polymerase subunit alpha"/>
    <property type="match status" value="1"/>
</dbReference>
<dbReference type="FunFam" id="2.170.120.12:FF:000001">
    <property type="entry name" value="DNA-directed RNA polymerase subunit alpha"/>
    <property type="match status" value="1"/>
</dbReference>
<dbReference type="Gene3D" id="1.10.150.20">
    <property type="entry name" value="5' to 3' exonuclease, C-terminal subdomain"/>
    <property type="match status" value="1"/>
</dbReference>
<dbReference type="Gene3D" id="2.170.120.12">
    <property type="entry name" value="DNA-directed RNA polymerase, insert domain"/>
    <property type="match status" value="1"/>
</dbReference>
<dbReference type="Gene3D" id="3.30.1360.10">
    <property type="entry name" value="RNA polymerase, RBP11-like subunit"/>
    <property type="match status" value="1"/>
</dbReference>
<dbReference type="HAMAP" id="MF_00059">
    <property type="entry name" value="RNApol_bact_RpoA"/>
    <property type="match status" value="1"/>
</dbReference>
<dbReference type="InterPro" id="IPR011262">
    <property type="entry name" value="DNA-dir_RNA_pol_insert"/>
</dbReference>
<dbReference type="InterPro" id="IPR011263">
    <property type="entry name" value="DNA-dir_RNA_pol_RpoA/D/Rpb3"/>
</dbReference>
<dbReference type="InterPro" id="IPR011773">
    <property type="entry name" value="DNA-dir_RpoA"/>
</dbReference>
<dbReference type="InterPro" id="IPR036603">
    <property type="entry name" value="RBP11-like"/>
</dbReference>
<dbReference type="InterPro" id="IPR011260">
    <property type="entry name" value="RNAP_asu_C"/>
</dbReference>
<dbReference type="InterPro" id="IPR036643">
    <property type="entry name" value="RNApol_insert_sf"/>
</dbReference>
<dbReference type="NCBIfam" id="NF003513">
    <property type="entry name" value="PRK05182.1-2"/>
    <property type="match status" value="1"/>
</dbReference>
<dbReference type="NCBIfam" id="NF003519">
    <property type="entry name" value="PRK05182.2-5"/>
    <property type="match status" value="1"/>
</dbReference>
<dbReference type="NCBIfam" id="TIGR02027">
    <property type="entry name" value="rpoA"/>
    <property type="match status" value="1"/>
</dbReference>
<dbReference type="Pfam" id="PF01000">
    <property type="entry name" value="RNA_pol_A_bac"/>
    <property type="match status" value="1"/>
</dbReference>
<dbReference type="Pfam" id="PF03118">
    <property type="entry name" value="RNA_pol_A_CTD"/>
    <property type="match status" value="1"/>
</dbReference>
<dbReference type="Pfam" id="PF01193">
    <property type="entry name" value="RNA_pol_L"/>
    <property type="match status" value="1"/>
</dbReference>
<dbReference type="SMART" id="SM00662">
    <property type="entry name" value="RPOLD"/>
    <property type="match status" value="1"/>
</dbReference>
<dbReference type="SUPFAM" id="SSF47789">
    <property type="entry name" value="C-terminal domain of RNA polymerase alpha subunit"/>
    <property type="match status" value="1"/>
</dbReference>
<dbReference type="SUPFAM" id="SSF56553">
    <property type="entry name" value="Insert subdomain of RNA polymerase alpha subunit"/>
    <property type="match status" value="1"/>
</dbReference>
<dbReference type="SUPFAM" id="SSF55257">
    <property type="entry name" value="RBP11-like subunits of RNA polymerase"/>
    <property type="match status" value="1"/>
</dbReference>
<proteinExistence type="inferred from homology"/>